<gene>
    <name evidence="1" type="primary">nadD</name>
    <name type="ordered locus">Noca_1820</name>
</gene>
<organism>
    <name type="scientific">Nocardioides sp. (strain ATCC BAA-499 / JS614)</name>
    <dbReference type="NCBI Taxonomy" id="196162"/>
    <lineage>
        <taxon>Bacteria</taxon>
        <taxon>Bacillati</taxon>
        <taxon>Actinomycetota</taxon>
        <taxon>Actinomycetes</taxon>
        <taxon>Propionibacteriales</taxon>
        <taxon>Nocardioidaceae</taxon>
        <taxon>Nocardioides</taxon>
    </lineage>
</organism>
<proteinExistence type="inferred from homology"/>
<name>NADD_NOCSJ</name>
<protein>
    <recommendedName>
        <fullName evidence="1">Probable nicotinate-nucleotide adenylyltransferase</fullName>
        <ecNumber evidence="1">2.7.7.18</ecNumber>
    </recommendedName>
    <alternativeName>
        <fullName evidence="1">Deamido-NAD(+) diphosphorylase</fullName>
    </alternativeName>
    <alternativeName>
        <fullName evidence="1">Deamido-NAD(+) pyrophosphorylase</fullName>
    </alternativeName>
    <alternativeName>
        <fullName evidence="1">Nicotinate mononucleotide adenylyltransferase</fullName>
        <shortName evidence="1">NaMN adenylyltransferase</shortName>
    </alternativeName>
</protein>
<evidence type="ECO:0000255" key="1">
    <source>
        <dbReference type="HAMAP-Rule" id="MF_00244"/>
    </source>
</evidence>
<reference key="1">
    <citation type="submission" date="2006-12" db="EMBL/GenBank/DDBJ databases">
        <title>Complete sequence of chromosome 1 of Nocardioides sp. JS614.</title>
        <authorList>
            <person name="Copeland A."/>
            <person name="Lucas S."/>
            <person name="Lapidus A."/>
            <person name="Barry K."/>
            <person name="Detter J.C."/>
            <person name="Glavina del Rio T."/>
            <person name="Hammon N."/>
            <person name="Israni S."/>
            <person name="Dalin E."/>
            <person name="Tice H."/>
            <person name="Pitluck S."/>
            <person name="Thompson L.S."/>
            <person name="Brettin T."/>
            <person name="Bruce D."/>
            <person name="Han C."/>
            <person name="Tapia R."/>
            <person name="Schmutz J."/>
            <person name="Larimer F."/>
            <person name="Land M."/>
            <person name="Hauser L."/>
            <person name="Kyrpides N."/>
            <person name="Kim E."/>
            <person name="Mattes T."/>
            <person name="Gossett J."/>
            <person name="Richardson P."/>
        </authorList>
    </citation>
    <scope>NUCLEOTIDE SEQUENCE [LARGE SCALE GENOMIC DNA]</scope>
    <source>
        <strain>ATCC BAA-499 / JS614</strain>
    </source>
</reference>
<feature type="chain" id="PRO_0000310129" description="Probable nicotinate-nucleotide adenylyltransferase">
    <location>
        <begin position="1"/>
        <end position="205"/>
    </location>
</feature>
<dbReference type="EC" id="2.7.7.18" evidence="1"/>
<dbReference type="EMBL" id="CP000509">
    <property type="protein sequence ID" value="ABL81332.1"/>
    <property type="molecule type" value="Genomic_DNA"/>
</dbReference>
<dbReference type="SMR" id="A1SHP7"/>
<dbReference type="STRING" id="196162.Noca_1820"/>
<dbReference type="KEGG" id="nca:Noca_1820"/>
<dbReference type="eggNOG" id="COG1057">
    <property type="taxonomic scope" value="Bacteria"/>
</dbReference>
<dbReference type="HOGENOM" id="CLU_069765_1_1_11"/>
<dbReference type="UniPathway" id="UPA00253">
    <property type="reaction ID" value="UER00332"/>
</dbReference>
<dbReference type="Proteomes" id="UP000000640">
    <property type="component" value="Chromosome"/>
</dbReference>
<dbReference type="GO" id="GO:0005524">
    <property type="term" value="F:ATP binding"/>
    <property type="evidence" value="ECO:0007669"/>
    <property type="project" value="UniProtKB-KW"/>
</dbReference>
<dbReference type="GO" id="GO:0004515">
    <property type="term" value="F:nicotinate-nucleotide adenylyltransferase activity"/>
    <property type="evidence" value="ECO:0007669"/>
    <property type="project" value="UniProtKB-UniRule"/>
</dbReference>
<dbReference type="GO" id="GO:0009435">
    <property type="term" value="P:NAD biosynthetic process"/>
    <property type="evidence" value="ECO:0007669"/>
    <property type="project" value="UniProtKB-UniRule"/>
</dbReference>
<dbReference type="CDD" id="cd02165">
    <property type="entry name" value="NMNAT"/>
    <property type="match status" value="1"/>
</dbReference>
<dbReference type="FunFam" id="3.40.50.620:FF:000039">
    <property type="entry name" value="Probable nicotinate-nucleotide adenylyltransferase"/>
    <property type="match status" value="1"/>
</dbReference>
<dbReference type="Gene3D" id="3.40.50.620">
    <property type="entry name" value="HUPs"/>
    <property type="match status" value="1"/>
</dbReference>
<dbReference type="HAMAP" id="MF_00244">
    <property type="entry name" value="NaMN_adenylyltr"/>
    <property type="match status" value="1"/>
</dbReference>
<dbReference type="InterPro" id="IPR004821">
    <property type="entry name" value="Cyt_trans-like"/>
</dbReference>
<dbReference type="InterPro" id="IPR005248">
    <property type="entry name" value="NadD/NMNAT"/>
</dbReference>
<dbReference type="InterPro" id="IPR014729">
    <property type="entry name" value="Rossmann-like_a/b/a_fold"/>
</dbReference>
<dbReference type="NCBIfam" id="TIGR00125">
    <property type="entry name" value="cyt_tran_rel"/>
    <property type="match status" value="1"/>
</dbReference>
<dbReference type="NCBIfam" id="TIGR00482">
    <property type="entry name" value="nicotinate (nicotinamide) nucleotide adenylyltransferase"/>
    <property type="match status" value="1"/>
</dbReference>
<dbReference type="NCBIfam" id="NF000840">
    <property type="entry name" value="PRK00071.1-3"/>
    <property type="match status" value="1"/>
</dbReference>
<dbReference type="PANTHER" id="PTHR39321">
    <property type="entry name" value="NICOTINATE-NUCLEOTIDE ADENYLYLTRANSFERASE-RELATED"/>
    <property type="match status" value="1"/>
</dbReference>
<dbReference type="PANTHER" id="PTHR39321:SF3">
    <property type="entry name" value="PHOSPHOPANTETHEINE ADENYLYLTRANSFERASE"/>
    <property type="match status" value="1"/>
</dbReference>
<dbReference type="Pfam" id="PF01467">
    <property type="entry name" value="CTP_transf_like"/>
    <property type="match status" value="1"/>
</dbReference>
<dbReference type="SUPFAM" id="SSF52374">
    <property type="entry name" value="Nucleotidylyl transferase"/>
    <property type="match status" value="1"/>
</dbReference>
<comment type="function">
    <text evidence="1">Catalyzes the reversible adenylation of nicotinate mononucleotide (NaMN) to nicotinic acid adenine dinucleotide (NaAD).</text>
</comment>
<comment type="catalytic activity">
    <reaction evidence="1">
        <text>nicotinate beta-D-ribonucleotide + ATP + H(+) = deamido-NAD(+) + diphosphate</text>
        <dbReference type="Rhea" id="RHEA:22860"/>
        <dbReference type="ChEBI" id="CHEBI:15378"/>
        <dbReference type="ChEBI" id="CHEBI:30616"/>
        <dbReference type="ChEBI" id="CHEBI:33019"/>
        <dbReference type="ChEBI" id="CHEBI:57502"/>
        <dbReference type="ChEBI" id="CHEBI:58437"/>
        <dbReference type="EC" id="2.7.7.18"/>
    </reaction>
</comment>
<comment type="pathway">
    <text evidence="1">Cofactor biosynthesis; NAD(+) biosynthesis; deamido-NAD(+) from nicotinate D-ribonucleotide: step 1/1.</text>
</comment>
<comment type="similarity">
    <text evidence="1">Belongs to the NadD family.</text>
</comment>
<keyword id="KW-0067">ATP-binding</keyword>
<keyword id="KW-0520">NAD</keyword>
<keyword id="KW-0547">Nucleotide-binding</keyword>
<keyword id="KW-0548">Nucleotidyltransferase</keyword>
<keyword id="KW-0662">Pyridine nucleotide biosynthesis</keyword>
<keyword id="KW-1185">Reference proteome</keyword>
<keyword id="KW-0808">Transferase</keyword>
<sequence>MGGTFDPIHHGHLVAASEVQAWFDLDEVLFVPTGDPWQKSDRDVSPAEHRYLMTVIATAANPRFTVSRVDIDRSGPTYTIDTLRDLRAQLPDAELYFITGVDALAEIFTWRDAEELFTLARFVGCTRPGYLMDDAALATIPTDRVTIVEIPALAISSTDCRRRSQRGEPVWYLVPDGVVQYLAKYDLYPRVIPPDTTKDTSEDMQ</sequence>
<accession>A1SHP7</accession>